<keyword id="KW-1003">Cell membrane</keyword>
<keyword id="KW-0472">Membrane</keyword>
<keyword id="KW-1185">Reference proteome</keyword>
<keyword id="KW-0812">Transmembrane</keyword>
<keyword id="KW-1133">Transmembrane helix</keyword>
<keyword id="KW-0813">Transport</keyword>
<feature type="chain" id="PRO_0000312851" description="Multidrug and toxin extrusion protein 1">
    <location>
        <begin position="1"/>
        <end position="574"/>
    </location>
</feature>
<feature type="topological domain" description="Cytoplasmic" evidence="2">
    <location>
        <begin position="1"/>
        <end position="51"/>
    </location>
</feature>
<feature type="transmembrane region" description="Helical" evidence="2">
    <location>
        <begin position="52"/>
        <end position="72"/>
    </location>
</feature>
<feature type="topological domain" description="Extracellular" evidence="2">
    <location>
        <begin position="73"/>
        <end position="86"/>
    </location>
</feature>
<feature type="transmembrane region" description="Helical" evidence="2">
    <location>
        <begin position="87"/>
        <end position="107"/>
    </location>
</feature>
<feature type="topological domain" description="Cytoplasmic" evidence="2">
    <location>
        <begin position="108"/>
        <end position="133"/>
    </location>
</feature>
<feature type="transmembrane region" description="Helical" evidence="2">
    <location>
        <begin position="134"/>
        <end position="154"/>
    </location>
</feature>
<feature type="topological domain" description="Extracellular" evidence="2">
    <location>
        <begin position="155"/>
        <end position="168"/>
    </location>
</feature>
<feature type="transmembrane region" description="Helical" evidence="2">
    <location>
        <begin position="169"/>
        <end position="189"/>
    </location>
</feature>
<feature type="topological domain" description="Cytoplasmic" evidence="2">
    <location>
        <begin position="190"/>
        <end position="204"/>
    </location>
</feature>
<feature type="transmembrane region" description="Helical" evidence="2">
    <location>
        <begin position="205"/>
        <end position="225"/>
    </location>
</feature>
<feature type="topological domain" description="Extracellular" evidence="2">
    <location>
        <begin position="226"/>
        <end position="230"/>
    </location>
</feature>
<feature type="transmembrane region" description="Helical" evidence="2">
    <location>
        <begin position="231"/>
        <end position="251"/>
    </location>
</feature>
<feature type="topological domain" description="Cytoplasmic" evidence="2">
    <location>
        <begin position="252"/>
        <end position="271"/>
    </location>
</feature>
<feature type="transmembrane region" description="Helical" evidence="2">
    <location>
        <begin position="272"/>
        <end position="291"/>
    </location>
</feature>
<feature type="topological domain" description="Extracellular" evidence="2">
    <location>
        <begin position="292"/>
        <end position="309"/>
    </location>
</feature>
<feature type="transmembrane region" description="Helical" evidence="2">
    <location>
        <begin position="310"/>
        <end position="330"/>
    </location>
</feature>
<feature type="topological domain" description="Cytoplasmic" evidence="2">
    <location>
        <begin position="331"/>
        <end position="350"/>
    </location>
</feature>
<feature type="transmembrane region" description="Helical" evidence="2">
    <location>
        <begin position="351"/>
        <end position="371"/>
    </location>
</feature>
<feature type="topological domain" description="Extracellular" evidence="2">
    <location>
        <begin position="372"/>
        <end position="384"/>
    </location>
</feature>
<feature type="transmembrane region" description="Helical" evidence="2">
    <location>
        <begin position="385"/>
        <end position="405"/>
    </location>
</feature>
<feature type="topological domain" description="Cytoplasmic" evidence="2">
    <location>
        <begin position="406"/>
        <end position="430"/>
    </location>
</feature>
<feature type="transmembrane region" description="Helical" evidence="2">
    <location>
        <begin position="431"/>
        <end position="451"/>
    </location>
</feature>
<feature type="topological domain" description="Extracellular" evidence="2">
    <location>
        <begin position="452"/>
        <end position="453"/>
    </location>
</feature>
<feature type="transmembrane region" description="Helical" evidence="2">
    <location>
        <begin position="454"/>
        <end position="472"/>
    </location>
</feature>
<feature type="topological domain" description="Cytoplasmic" evidence="2">
    <location>
        <begin position="473"/>
        <end position="549"/>
    </location>
</feature>
<feature type="transmembrane region" description="Helical" evidence="2">
    <location>
        <begin position="550"/>
        <end position="570"/>
    </location>
</feature>
<feature type="topological domain" description="Extracellular" evidence="2">
    <location>
        <begin position="571"/>
        <end position="574"/>
    </location>
</feature>
<feature type="region of interest" description="Disordered" evidence="3">
    <location>
        <begin position="500"/>
        <end position="541"/>
    </location>
</feature>
<feature type="compositionally biased region" description="Low complexity" evidence="3">
    <location>
        <begin position="521"/>
        <end position="538"/>
    </location>
</feature>
<protein>
    <recommendedName>
        <fullName>Multidrug and toxin extrusion protein 1</fullName>
        <shortName>MATE-1</shortName>
    </recommendedName>
    <alternativeName>
        <fullName>Solute carrier family 47 member 1</fullName>
    </alternativeName>
</protein>
<sequence>MEGQAAETNHRAETVVRAELCLSAEQGPETTAYSQKRCLFLPMEVWQEAQQLLALAAPAFLSQLMIFLISIVSSIFCGHLGKVELDAVSLAITIINITGVAVGTGLAGACDTLISQTFGGSNLKLVGIILQRGILILLLFCFPCWALLINTESILLLFRQDPEVSKLTQIYVLIFLPALPAAFLYQLLAKYLQNQGIIYPQVLTGFIANIFNALFNYILLYVLGLGVMGSACANTVSQFIQMILLFLYIVWRRLYADTWGGWSQACFEEWGAFIRLAVASMLMLCIEWWAFEISMFLAGVLGMVDLAAQAIIYQVAIVVYLIPLGLCIAGSIRVGHGLGAGNTEQAKRSALVVLCMTELCALLSGILLATLKDVVAYIFTSDPNIVALVSYVLPVYSACLLFDACVAACGGILRGSGKLKVGAISHTVGYYVIGLPLGISLMFAAKLGIIGFWFGILACGIAQSIFLIIFVFKIDWKRASEEAQTRASERVEIPQKIDNKPSVYQEGCPTEQGDVDPGNVESIEFSQSSTSSEGTSPTPAGAAQHTRTLILTRGLALGCAVGTLIIGIVIRLSV</sequence>
<gene>
    <name type="primary">slc47a1</name>
    <name type="synonym">mate1</name>
</gene>
<evidence type="ECO:0000250" key="1">
    <source>
        <dbReference type="UniProtKB" id="Q96FL8"/>
    </source>
</evidence>
<evidence type="ECO:0000255" key="2"/>
<evidence type="ECO:0000256" key="3">
    <source>
        <dbReference type="SAM" id="MobiDB-lite"/>
    </source>
</evidence>
<evidence type="ECO:0000305" key="4"/>
<reference key="1">
    <citation type="submission" date="2007-03" db="EMBL/GenBank/DDBJ databases">
        <authorList>
            <consortium name="NIH - Xenopus Gene Collection (XGC) project"/>
        </authorList>
    </citation>
    <scope>NUCLEOTIDE SEQUENCE [LARGE SCALE MRNA]</scope>
    <source>
        <tissue>Brain</tissue>
    </source>
</reference>
<accession>A4IIS8</accession>
<name>S47A1_XENTR</name>
<proteinExistence type="evidence at transcript level"/>
<comment type="function">
    <text evidence="1">Multidrug efflux pump that functions as a H(+)/organic cation antiporter. Mediates the secretion of cationic compounds including drugs, toxins and endogenous metabolites. Plays a role physiological role in the excretion of drugs, toxins and endogenous metabolites through the kidney and liver, into urine and bile respectively.</text>
</comment>
<comment type="catalytic activity">
    <reaction evidence="1">
        <text>thiamine(out) + H(+)(in) = thiamine(in) + H(+)(out)</text>
        <dbReference type="Rhea" id="RHEA:71271"/>
        <dbReference type="ChEBI" id="CHEBI:15378"/>
        <dbReference type="ChEBI" id="CHEBI:18385"/>
    </reaction>
</comment>
<comment type="catalytic activity">
    <reaction evidence="1">
        <text>estrone 3-sulfate(in) + H(+)(out) = estrone 3-sulfate(out) + H(+)(in)</text>
        <dbReference type="Rhea" id="RHEA:72139"/>
        <dbReference type="ChEBI" id="CHEBI:15378"/>
        <dbReference type="ChEBI" id="CHEBI:60050"/>
    </reaction>
</comment>
<comment type="catalytic activity">
    <reaction evidence="1">
        <text>creatinine(in) + H(+)(out) = creatinine(out) + H(+)(in)</text>
        <dbReference type="Rhea" id="RHEA:72183"/>
        <dbReference type="ChEBI" id="CHEBI:15378"/>
        <dbReference type="ChEBI" id="CHEBI:16737"/>
    </reaction>
</comment>
<comment type="catalytic activity">
    <reaction evidence="1">
        <text>agmatine(in) + H(+)(out) = agmatine(out) + H(+)(in)</text>
        <dbReference type="Rhea" id="RHEA:72127"/>
        <dbReference type="ChEBI" id="CHEBI:15378"/>
        <dbReference type="ChEBI" id="CHEBI:58145"/>
    </reaction>
    <physiologicalReaction direction="left-to-right" evidence="1">
        <dbReference type="Rhea" id="RHEA:72128"/>
    </physiologicalReaction>
    <physiologicalReaction direction="right-to-left" evidence="1">
        <dbReference type="Rhea" id="RHEA:72129"/>
    </physiologicalReaction>
</comment>
<comment type="subcellular location">
    <subcellularLocation>
        <location evidence="1">Cell membrane</location>
        <topology evidence="2">Multi-pass membrane protein</topology>
    </subcellularLocation>
    <subcellularLocation>
        <location evidence="1">Apical cell membrane</location>
        <topology evidence="2">Multi-pass membrane protein</topology>
    </subcellularLocation>
    <text evidence="1">Localizes to the plasma membrane; at the brush border membranes of the proximal tubules (kidney) and at the bile caniculi (liver).</text>
</comment>
<comment type="similarity">
    <text evidence="4">Belongs to the multi antimicrobial extrusion (MATE) (TC 2.A.66.1) family.</text>
</comment>
<dbReference type="EMBL" id="BC136138">
    <property type="protein sequence ID" value="AAI36139.1"/>
    <property type="molecule type" value="mRNA"/>
</dbReference>
<dbReference type="RefSeq" id="NP_001096440.1">
    <property type="nucleotide sequence ID" value="NM_001102970.1"/>
</dbReference>
<dbReference type="SMR" id="A4IIS8"/>
<dbReference type="FunCoup" id="A4IIS8">
    <property type="interactions" value="648"/>
</dbReference>
<dbReference type="STRING" id="8364.ENSXETP00000033315"/>
<dbReference type="PaxDb" id="8364-ENSXETP00000049598"/>
<dbReference type="GeneID" id="100125051"/>
<dbReference type="KEGG" id="xtr:100125051"/>
<dbReference type="AGR" id="Xenbase:XB-GENE-5793831"/>
<dbReference type="CTD" id="146802"/>
<dbReference type="Xenbase" id="XB-GENE-5793831">
    <property type="gene designation" value="slc47a2"/>
</dbReference>
<dbReference type="eggNOG" id="KOG1347">
    <property type="taxonomic scope" value="Eukaryota"/>
</dbReference>
<dbReference type="InParanoid" id="A4IIS8"/>
<dbReference type="OMA" id="GMMLSEW"/>
<dbReference type="OrthoDB" id="2126698at2759"/>
<dbReference type="Reactome" id="R-XTR-425366">
    <property type="pathway name" value="Transport of bile salts and organic acids, metal ions and amine compounds"/>
</dbReference>
<dbReference type="Proteomes" id="UP000008143">
    <property type="component" value="Chromosome 8"/>
</dbReference>
<dbReference type="GO" id="GO:0016324">
    <property type="term" value="C:apical plasma membrane"/>
    <property type="evidence" value="ECO:0000250"/>
    <property type="project" value="UniProtKB"/>
</dbReference>
<dbReference type="GO" id="GO:0015297">
    <property type="term" value="F:antiporter activity"/>
    <property type="evidence" value="ECO:0000250"/>
    <property type="project" value="UniProtKB"/>
</dbReference>
<dbReference type="GO" id="GO:0015101">
    <property type="term" value="F:organic cation transmembrane transporter activity"/>
    <property type="evidence" value="ECO:0000250"/>
    <property type="project" value="UniProtKB"/>
</dbReference>
<dbReference type="GO" id="GO:0042910">
    <property type="term" value="F:xenobiotic transmembrane transporter activity"/>
    <property type="evidence" value="ECO:0000250"/>
    <property type="project" value="UniProtKB"/>
</dbReference>
<dbReference type="GO" id="GO:0015695">
    <property type="term" value="P:organic cation transport"/>
    <property type="evidence" value="ECO:0000250"/>
    <property type="project" value="UniProtKB"/>
</dbReference>
<dbReference type="GO" id="GO:1990961">
    <property type="term" value="P:xenobiotic detoxification by transmembrane export across the plasma membrane"/>
    <property type="evidence" value="ECO:0000250"/>
    <property type="project" value="UniProtKB"/>
</dbReference>
<dbReference type="CDD" id="cd13132">
    <property type="entry name" value="MATE_eukaryotic"/>
    <property type="match status" value="1"/>
</dbReference>
<dbReference type="InterPro" id="IPR045069">
    <property type="entry name" value="MATE_euk"/>
</dbReference>
<dbReference type="InterPro" id="IPR002528">
    <property type="entry name" value="MATE_fam"/>
</dbReference>
<dbReference type="NCBIfam" id="TIGR00797">
    <property type="entry name" value="matE"/>
    <property type="match status" value="1"/>
</dbReference>
<dbReference type="PANTHER" id="PTHR11206">
    <property type="entry name" value="MULTIDRUG RESISTANCE PROTEIN"/>
    <property type="match status" value="1"/>
</dbReference>
<dbReference type="Pfam" id="PF01554">
    <property type="entry name" value="MatE"/>
    <property type="match status" value="2"/>
</dbReference>
<organism>
    <name type="scientific">Xenopus tropicalis</name>
    <name type="common">Western clawed frog</name>
    <name type="synonym">Silurana tropicalis</name>
    <dbReference type="NCBI Taxonomy" id="8364"/>
    <lineage>
        <taxon>Eukaryota</taxon>
        <taxon>Metazoa</taxon>
        <taxon>Chordata</taxon>
        <taxon>Craniata</taxon>
        <taxon>Vertebrata</taxon>
        <taxon>Euteleostomi</taxon>
        <taxon>Amphibia</taxon>
        <taxon>Batrachia</taxon>
        <taxon>Anura</taxon>
        <taxon>Pipoidea</taxon>
        <taxon>Pipidae</taxon>
        <taxon>Xenopodinae</taxon>
        <taxon>Xenopus</taxon>
        <taxon>Silurana</taxon>
    </lineage>
</organism>